<accession>Q5F267</accession>
<feature type="signal peptide" evidence="2">
    <location>
        <begin position="1"/>
        <end position="27"/>
    </location>
</feature>
<feature type="chain" id="PRO_0000333825" description="Tumor protein p53-inducible protein 13">
    <location>
        <begin position="28"/>
        <end position="385"/>
    </location>
</feature>
<feature type="topological domain" description="Extracellular" evidence="2">
    <location>
        <begin position="28"/>
        <end position="301"/>
    </location>
</feature>
<feature type="transmembrane region" description="Helical" evidence="2">
    <location>
        <begin position="302"/>
        <end position="322"/>
    </location>
</feature>
<feature type="topological domain" description="Cytoplasmic" evidence="2">
    <location>
        <begin position="323"/>
        <end position="385"/>
    </location>
</feature>
<feature type="region of interest" description="Disordered" evidence="3">
    <location>
        <begin position="242"/>
        <end position="297"/>
    </location>
</feature>
<feature type="region of interest" description="Disordered" evidence="3">
    <location>
        <begin position="359"/>
        <end position="385"/>
    </location>
</feature>
<feature type="compositionally biased region" description="Low complexity" evidence="3">
    <location>
        <begin position="281"/>
        <end position="297"/>
    </location>
</feature>
<feature type="compositionally biased region" description="Basic residues" evidence="3">
    <location>
        <begin position="359"/>
        <end position="369"/>
    </location>
</feature>
<comment type="function">
    <text evidence="1">May act as a tumor suppressor. Inhibits tumor cell growth, when overexpressed (By similarity).</text>
</comment>
<comment type="subcellular location">
    <subcellularLocation>
        <location evidence="4">Cell membrane</location>
        <topology evidence="4">Single-pass type I membrane protein</topology>
        <orientation evidence="4">Extracellular side</orientation>
    </subcellularLocation>
    <subcellularLocation>
        <location evidence="1">Cytoplasm</location>
    </subcellularLocation>
    <text evidence="1">Associates with unknown subcellular structures in the cytoplasm.</text>
</comment>
<reference key="1">
    <citation type="journal article" date="2009" name="PLoS Biol.">
        <title>Lineage-specific biology revealed by a finished genome assembly of the mouse.</title>
        <authorList>
            <person name="Church D.M."/>
            <person name="Goodstadt L."/>
            <person name="Hillier L.W."/>
            <person name="Zody M.C."/>
            <person name="Goldstein S."/>
            <person name="She X."/>
            <person name="Bult C.J."/>
            <person name="Agarwala R."/>
            <person name="Cherry J.L."/>
            <person name="DiCuccio M."/>
            <person name="Hlavina W."/>
            <person name="Kapustin Y."/>
            <person name="Meric P."/>
            <person name="Maglott D."/>
            <person name="Birtle Z."/>
            <person name="Marques A.C."/>
            <person name="Graves T."/>
            <person name="Zhou S."/>
            <person name="Teague B."/>
            <person name="Potamousis K."/>
            <person name="Churas C."/>
            <person name="Place M."/>
            <person name="Herschleb J."/>
            <person name="Runnheim R."/>
            <person name="Forrest D."/>
            <person name="Amos-Landgraf J."/>
            <person name="Schwartz D.C."/>
            <person name="Cheng Z."/>
            <person name="Lindblad-Toh K."/>
            <person name="Eichler E.E."/>
            <person name="Ponting C.P."/>
        </authorList>
    </citation>
    <scope>NUCLEOTIDE SEQUENCE [LARGE SCALE GENOMIC DNA]</scope>
    <source>
        <strain>C57BL/6J</strain>
    </source>
</reference>
<proteinExistence type="inferred from homology"/>
<name>P5I13_MOUSE</name>
<gene>
    <name type="primary">Tp53i13</name>
    <name type="synonym">Trp53i13</name>
</gene>
<sequence>MVHPPPPPPRLLLVALVGLLSLREVVAEPAEEAGTPCPEGLWPVPPQVLPRVTYTQVSQGQAEGIAFFYHPCAHPWLKLQLALLAHLYVAKPTLIPDFSLTWDRPLVLTAWGTALELAWIEPAWVAHWLKRQRRRKQRKSVWFLSDNLFGPTPTMPASRRGKLCGRRCVQAPTLAFALRSWRPPGAQVTSRGSGRSSISVVKRRGLRAALGLQSTPPGLRVSLASSQSLKAQQLTLGTSSVAPVSLTTGGPGGNGRSRTEAQMPSGQGNHGGCACPGQVSPAPRAAGPPRVARGPTPRTEEAAWAAMALTFLLVLLTLATLCTRLHRNFRRSESIYWGPTADSQDTVAALLKRRLPLPSRRIKRSRRRPLLPPTPDSGPDSESSD</sequence>
<evidence type="ECO:0000250" key="1"/>
<evidence type="ECO:0000255" key="2"/>
<evidence type="ECO:0000256" key="3">
    <source>
        <dbReference type="SAM" id="MobiDB-lite"/>
    </source>
</evidence>
<evidence type="ECO:0000305" key="4"/>
<organism>
    <name type="scientific">Mus musculus</name>
    <name type="common">Mouse</name>
    <dbReference type="NCBI Taxonomy" id="10090"/>
    <lineage>
        <taxon>Eukaryota</taxon>
        <taxon>Metazoa</taxon>
        <taxon>Chordata</taxon>
        <taxon>Craniata</taxon>
        <taxon>Vertebrata</taxon>
        <taxon>Euteleostomi</taxon>
        <taxon>Mammalia</taxon>
        <taxon>Eutheria</taxon>
        <taxon>Euarchontoglires</taxon>
        <taxon>Glires</taxon>
        <taxon>Rodentia</taxon>
        <taxon>Myomorpha</taxon>
        <taxon>Muroidea</taxon>
        <taxon>Muridae</taxon>
        <taxon>Murinae</taxon>
        <taxon>Mus</taxon>
        <taxon>Mus</taxon>
    </lineage>
</organism>
<dbReference type="EMBL" id="AL591136">
    <property type="status" value="NOT_ANNOTATED_CDS"/>
    <property type="molecule type" value="Genomic_DNA"/>
</dbReference>
<dbReference type="EMBL" id="AL607072">
    <property type="status" value="NOT_ANNOTATED_CDS"/>
    <property type="molecule type" value="Genomic_DNA"/>
</dbReference>
<dbReference type="EMBL" id="AL645588">
    <property type="status" value="NOT_ANNOTATED_CDS"/>
    <property type="molecule type" value="Genomic_DNA"/>
</dbReference>
<dbReference type="CCDS" id="CCDS25081.1"/>
<dbReference type="RefSeq" id="NP_001020091.1">
    <property type="nucleotide sequence ID" value="NM_001024920.1"/>
</dbReference>
<dbReference type="FunCoup" id="Q5F267">
    <property type="interactions" value="415"/>
</dbReference>
<dbReference type="STRING" id="10090.ENSMUSP00000057592"/>
<dbReference type="GlyGen" id="Q5F267">
    <property type="glycosylation" value="4 sites"/>
</dbReference>
<dbReference type="iPTMnet" id="Q5F267"/>
<dbReference type="PhosphoSitePlus" id="Q5F267"/>
<dbReference type="PaxDb" id="10090-ENSMUSP00000057592"/>
<dbReference type="ProteomicsDB" id="294306"/>
<dbReference type="Antibodypedia" id="26724">
    <property type="antibodies" value="75 antibodies from 17 providers"/>
</dbReference>
<dbReference type="Ensembl" id="ENSMUST00000060417.11">
    <property type="protein sequence ID" value="ENSMUSP00000057592.5"/>
    <property type="gene ID" value="ENSMUSG00000044328.14"/>
</dbReference>
<dbReference type="GeneID" id="216964"/>
<dbReference type="KEGG" id="mmu:216964"/>
<dbReference type="UCSC" id="uc007kgz.1">
    <property type="organism name" value="mouse"/>
</dbReference>
<dbReference type="AGR" id="MGI:1915125"/>
<dbReference type="CTD" id="216964"/>
<dbReference type="MGI" id="MGI:1915125">
    <property type="gene designation" value="Trp53i13"/>
</dbReference>
<dbReference type="VEuPathDB" id="HostDB:ENSMUSG00000044328"/>
<dbReference type="eggNOG" id="ENOG502S8FW">
    <property type="taxonomic scope" value="Eukaryota"/>
</dbReference>
<dbReference type="GeneTree" id="ENSGT00390000008202"/>
<dbReference type="HOGENOM" id="CLU_058647_0_0_1"/>
<dbReference type="InParanoid" id="Q5F267"/>
<dbReference type="OMA" id="WGMALEM"/>
<dbReference type="OrthoDB" id="5960270at2759"/>
<dbReference type="PhylomeDB" id="Q5F267"/>
<dbReference type="TreeFam" id="TF314247"/>
<dbReference type="BioGRID-ORCS" id="216964">
    <property type="hits" value="2 hits in 78 CRISPR screens"/>
</dbReference>
<dbReference type="ChiTaRS" id="Trp53i13">
    <property type="organism name" value="mouse"/>
</dbReference>
<dbReference type="PRO" id="PR:Q5F267"/>
<dbReference type="Proteomes" id="UP000000589">
    <property type="component" value="Chromosome 11"/>
</dbReference>
<dbReference type="RNAct" id="Q5F267">
    <property type="molecule type" value="protein"/>
</dbReference>
<dbReference type="Bgee" id="ENSMUSG00000044328">
    <property type="expression patterns" value="Expressed in ankle joint and 196 other cell types or tissues"/>
</dbReference>
<dbReference type="ExpressionAtlas" id="Q5F267">
    <property type="expression patterns" value="baseline and differential"/>
</dbReference>
<dbReference type="GO" id="GO:0005737">
    <property type="term" value="C:cytoplasm"/>
    <property type="evidence" value="ECO:0007669"/>
    <property type="project" value="UniProtKB-SubCell"/>
</dbReference>
<dbReference type="GO" id="GO:0005886">
    <property type="term" value="C:plasma membrane"/>
    <property type="evidence" value="ECO:0007669"/>
    <property type="project" value="UniProtKB-SubCell"/>
</dbReference>
<dbReference type="GO" id="GO:0045786">
    <property type="term" value="P:negative regulation of cell cycle"/>
    <property type="evidence" value="ECO:0007669"/>
    <property type="project" value="Ensembl"/>
</dbReference>
<dbReference type="GO" id="GO:0009411">
    <property type="term" value="P:response to UV"/>
    <property type="evidence" value="ECO:0007669"/>
    <property type="project" value="Ensembl"/>
</dbReference>
<dbReference type="GO" id="GO:0009410">
    <property type="term" value="P:response to xenobiotic stimulus"/>
    <property type="evidence" value="ECO:0007669"/>
    <property type="project" value="Ensembl"/>
</dbReference>
<dbReference type="PANTHER" id="PTHR34179">
    <property type="entry name" value="TUMOR PROTEIN P53-INDUCIBLE PROTEIN 13"/>
    <property type="match status" value="1"/>
</dbReference>
<dbReference type="PANTHER" id="PTHR34179:SF1">
    <property type="entry name" value="TUMOR PROTEIN P53-INDUCIBLE PROTEIN 13"/>
    <property type="match status" value="1"/>
</dbReference>
<keyword id="KW-1003">Cell membrane</keyword>
<keyword id="KW-0963">Cytoplasm</keyword>
<keyword id="KW-0472">Membrane</keyword>
<keyword id="KW-1185">Reference proteome</keyword>
<keyword id="KW-0732">Signal</keyword>
<keyword id="KW-0812">Transmembrane</keyword>
<keyword id="KW-1133">Transmembrane helix</keyword>
<protein>
    <recommendedName>
        <fullName>Tumor protein p53-inducible protein 13</fullName>
    </recommendedName>
</protein>